<keyword id="KW-0201">Cytochrome c-type biogenesis</keyword>
<keyword id="KW-0472">Membrane</keyword>
<keyword id="KW-1185">Reference proteome</keyword>
<keyword id="KW-0793">Thylakoid</keyword>
<keyword id="KW-0812">Transmembrane</keyword>
<keyword id="KW-1133">Transmembrane helix</keyword>
<feature type="chain" id="PRO_0000363633" description="Cytochrome c biogenesis protein CcsB">
    <location>
        <begin position="1"/>
        <end position="430"/>
    </location>
</feature>
<feature type="transmembrane region" description="Helical" evidence="1">
    <location>
        <begin position="14"/>
        <end position="34"/>
    </location>
</feature>
<feature type="transmembrane region" description="Helical" evidence="1">
    <location>
        <begin position="72"/>
        <end position="92"/>
    </location>
</feature>
<feature type="transmembrane region" description="Helical" evidence="1">
    <location>
        <begin position="162"/>
        <end position="182"/>
    </location>
</feature>
<accession>A5GNE2</accession>
<proteinExistence type="inferred from homology"/>
<gene>
    <name evidence="1" type="primary">ccsB</name>
    <name evidence="1" type="synonym">ccs1</name>
    <name type="ordered locus">SynWH7803_2031</name>
</gene>
<reference key="1">
    <citation type="submission" date="2006-05" db="EMBL/GenBank/DDBJ databases">
        <authorList>
            <consortium name="Genoscope"/>
        </authorList>
    </citation>
    <scope>NUCLEOTIDE SEQUENCE [LARGE SCALE GENOMIC DNA]</scope>
    <source>
        <strain>WH7803</strain>
    </source>
</reference>
<comment type="function">
    <text evidence="1">Required during biogenesis of c-type cytochromes (cytochrome c6 and cytochrome f) at the step of heme attachment.</text>
</comment>
<comment type="subunit">
    <text evidence="1">May interact with CcsA.</text>
</comment>
<comment type="subcellular location">
    <subcellularLocation>
        <location evidence="1">Cellular thylakoid membrane</location>
        <topology evidence="1">Multi-pass membrane protein</topology>
    </subcellularLocation>
</comment>
<comment type="similarity">
    <text evidence="1">Belongs to the Ccs1/CcsB family.</text>
</comment>
<organism>
    <name type="scientific">Synechococcus sp. (strain WH7803)</name>
    <dbReference type="NCBI Taxonomy" id="32051"/>
    <lineage>
        <taxon>Bacteria</taxon>
        <taxon>Bacillati</taxon>
        <taxon>Cyanobacteriota</taxon>
        <taxon>Cyanophyceae</taxon>
        <taxon>Synechococcales</taxon>
        <taxon>Synechococcaceae</taxon>
        <taxon>Synechococcus</taxon>
    </lineage>
</organism>
<protein>
    <recommendedName>
        <fullName evidence="1">Cytochrome c biogenesis protein CcsB</fullName>
    </recommendedName>
</protein>
<sequence length="430" mass="46763">MRTLNRVFAILSDLRLAIALLLLIAAASAVGTILPQQEAPELYLERFNADPWLGLINGDQMLAFQLDHLYSSVWFLALLAWLGLALMLCSWRRQWPALQAAMRWIDYTRPRQLSKLALAETLSCASSDGALSSLAIELKSRGWQVKQHQDRLAARRGVVGRVGPLLVHTGLVLLLIGAAWGALAGQRLERFLAPGRSLDLLDPAGANRLSLTLENFSITRDPAGRAEQFQSTLTLSPPGQEDERRTISVNHPLRYQGMTVYQADWSLAAVTVQIGKSPMLQLPLSTFPELGDQVWGLVLPTRPDGSEPVFLSTSSEQGPVQVFGSDGALITNLRPGGEGTEVRGLPLKVIDILPASGLLLKRDPGVPLVYAGFAITLLGGALSMVATRQIWVISDAVHQRLHIGGLCNRNLLGFAAELPELINRVDVSHG</sequence>
<evidence type="ECO:0000255" key="1">
    <source>
        <dbReference type="HAMAP-Rule" id="MF_01392"/>
    </source>
</evidence>
<dbReference type="EMBL" id="CT971583">
    <property type="protein sequence ID" value="CAK24457.1"/>
    <property type="molecule type" value="Genomic_DNA"/>
</dbReference>
<dbReference type="STRING" id="32051.SynWH7803_2031"/>
<dbReference type="KEGG" id="syx:SynWH7803_2031"/>
<dbReference type="eggNOG" id="COG1333">
    <property type="taxonomic scope" value="Bacteria"/>
</dbReference>
<dbReference type="HOGENOM" id="CLU_034630_0_0_3"/>
<dbReference type="OrthoDB" id="9770923at2"/>
<dbReference type="Proteomes" id="UP000001566">
    <property type="component" value="Chromosome"/>
</dbReference>
<dbReference type="GO" id="GO:0031676">
    <property type="term" value="C:plasma membrane-derived thylakoid membrane"/>
    <property type="evidence" value="ECO:0007669"/>
    <property type="project" value="UniProtKB-SubCell"/>
</dbReference>
<dbReference type="GO" id="GO:0017004">
    <property type="term" value="P:cytochrome complex assembly"/>
    <property type="evidence" value="ECO:0007669"/>
    <property type="project" value="UniProtKB-UniRule"/>
</dbReference>
<dbReference type="HAMAP" id="MF_01392">
    <property type="entry name" value="CytC_Ccs1"/>
    <property type="match status" value="1"/>
</dbReference>
<dbReference type="InterPro" id="IPR023494">
    <property type="entry name" value="Cyt_c_bgen_Ccs1/CcsB/ResB"/>
</dbReference>
<dbReference type="InterPro" id="IPR007816">
    <property type="entry name" value="ResB-like_domain"/>
</dbReference>
<dbReference type="PANTHER" id="PTHR31566">
    <property type="entry name" value="CYTOCHROME C BIOGENESIS PROTEIN CCS1, CHLOROPLASTIC"/>
    <property type="match status" value="1"/>
</dbReference>
<dbReference type="PANTHER" id="PTHR31566:SF0">
    <property type="entry name" value="CYTOCHROME C BIOGENESIS PROTEIN CCS1, CHLOROPLASTIC"/>
    <property type="match status" value="1"/>
</dbReference>
<dbReference type="Pfam" id="PF05140">
    <property type="entry name" value="ResB"/>
    <property type="match status" value="2"/>
</dbReference>
<name>CCS1_SYNPW</name>